<gene>
    <name type="ordered locus">NGR_a01320</name>
    <name type="ORF">y4uH</name>
</gene>
<organism>
    <name type="scientific">Sinorhizobium fredii (strain NBRC 101917 / NGR234)</name>
    <dbReference type="NCBI Taxonomy" id="394"/>
    <lineage>
        <taxon>Bacteria</taxon>
        <taxon>Pseudomonadati</taxon>
        <taxon>Pseudomonadota</taxon>
        <taxon>Alphaproteobacteria</taxon>
        <taxon>Hyphomicrobiales</taxon>
        <taxon>Rhizobiaceae</taxon>
        <taxon>Sinorhizobium/Ensifer group</taxon>
        <taxon>Sinorhizobium</taxon>
    </lineage>
</organism>
<accession>Q53200</accession>
<feature type="chain" id="PRO_0000075485" description="Putative insertion sequence ATP-binding protein y4uH">
    <location>
        <begin position="1"/>
        <end position="248"/>
    </location>
</feature>
<feature type="binding site" evidence="1">
    <location>
        <begin position="106"/>
        <end position="113"/>
    </location>
    <ligand>
        <name>ATP</name>
        <dbReference type="ChEBI" id="CHEBI:30616"/>
    </ligand>
</feature>
<reference key="1">
    <citation type="journal article" date="1996" name="Genome Res.">
        <title>Sequencing the 500-kb GC-rich symbiotic replicon of Rhizobium sp. NGR234 using dye terminators and a thermostable 'sequenase': a beginning.</title>
        <authorList>
            <person name="Freiberg C."/>
            <person name="Perret X."/>
            <person name="Broughton W.J."/>
            <person name="Rosenthal A."/>
        </authorList>
    </citation>
    <scope>NUCLEOTIDE SEQUENCE [GENOMIC DNA]</scope>
</reference>
<reference key="2">
    <citation type="journal article" date="1997" name="Nature">
        <title>Molecular basis of symbiosis between Rhizobium and legumes.</title>
        <authorList>
            <person name="Freiberg C.A."/>
            <person name="Fellay R."/>
            <person name="Bairoch A."/>
            <person name="Broughton W.J."/>
            <person name="Rosenthal A."/>
            <person name="Perret X."/>
        </authorList>
    </citation>
    <scope>NUCLEOTIDE SEQUENCE [LARGE SCALE GENOMIC DNA]</scope>
    <source>
        <strain>NBRC 101917 / NGR234</strain>
    </source>
</reference>
<reference key="3">
    <citation type="journal article" date="2009" name="Appl. Environ. Microbiol.">
        <title>Rhizobium sp. strain NGR234 possesses a remarkable number of secretion systems.</title>
        <authorList>
            <person name="Schmeisser C."/>
            <person name="Liesegang H."/>
            <person name="Krysciak D."/>
            <person name="Bakkou N."/>
            <person name="Le Quere A."/>
            <person name="Wollherr A."/>
            <person name="Heinemeyer I."/>
            <person name="Morgenstern B."/>
            <person name="Pommerening-Roeser A."/>
            <person name="Flores M."/>
            <person name="Palacios R."/>
            <person name="Brenner S."/>
            <person name="Gottschalk G."/>
            <person name="Schmitz R.A."/>
            <person name="Broughton W.J."/>
            <person name="Perret X."/>
            <person name="Strittmatter A.W."/>
            <person name="Streit W.R."/>
        </authorList>
    </citation>
    <scope>NUCLEOTIDE SEQUENCE [LARGE SCALE GENOMIC DNA]</scope>
    <source>
        <strain>NBRC 101917 / NGR234</strain>
    </source>
</reference>
<evidence type="ECO:0000255" key="1"/>
<evidence type="ECO:0000305" key="2"/>
<dbReference type="EMBL" id="Z68203">
    <property type="protein sequence ID" value="CAA92407.1"/>
    <property type="molecule type" value="Genomic_DNA"/>
</dbReference>
<dbReference type="EMBL" id="U00090">
    <property type="protein sequence ID" value="AAB91880.1"/>
    <property type="molecule type" value="Genomic_DNA"/>
</dbReference>
<dbReference type="RefSeq" id="NP_444093.1">
    <property type="nucleotide sequence ID" value="NC_000914.2"/>
</dbReference>
<dbReference type="RefSeq" id="WP_010875170.1">
    <property type="nucleotide sequence ID" value="NC_000914.2"/>
</dbReference>
<dbReference type="SMR" id="Q53200"/>
<dbReference type="KEGG" id="rhi:NGR_a01320"/>
<dbReference type="PATRIC" id="fig|394.7.peg.115"/>
<dbReference type="eggNOG" id="COG1484">
    <property type="taxonomic scope" value="Bacteria"/>
</dbReference>
<dbReference type="HOGENOM" id="CLU_062999_7_0_5"/>
<dbReference type="OrthoDB" id="8150723at2"/>
<dbReference type="Proteomes" id="UP000001054">
    <property type="component" value="Plasmid pNGR234a"/>
</dbReference>
<dbReference type="GO" id="GO:0005524">
    <property type="term" value="F:ATP binding"/>
    <property type="evidence" value="ECO:0007669"/>
    <property type="project" value="UniProtKB-KW"/>
</dbReference>
<dbReference type="GO" id="GO:0016887">
    <property type="term" value="F:ATP hydrolysis activity"/>
    <property type="evidence" value="ECO:0007669"/>
    <property type="project" value="InterPro"/>
</dbReference>
<dbReference type="GO" id="GO:0006260">
    <property type="term" value="P:DNA replication"/>
    <property type="evidence" value="ECO:0007669"/>
    <property type="project" value="TreeGrafter"/>
</dbReference>
<dbReference type="CDD" id="cd00009">
    <property type="entry name" value="AAA"/>
    <property type="match status" value="1"/>
</dbReference>
<dbReference type="Gene3D" id="3.40.50.300">
    <property type="entry name" value="P-loop containing nucleotide triphosphate hydrolases"/>
    <property type="match status" value="1"/>
</dbReference>
<dbReference type="InterPro" id="IPR003593">
    <property type="entry name" value="AAA+_ATPase"/>
</dbReference>
<dbReference type="InterPro" id="IPR028350">
    <property type="entry name" value="DNAC/IstB-like"/>
</dbReference>
<dbReference type="InterPro" id="IPR047661">
    <property type="entry name" value="IstB"/>
</dbReference>
<dbReference type="InterPro" id="IPR002611">
    <property type="entry name" value="IstB_ATP-bd"/>
</dbReference>
<dbReference type="InterPro" id="IPR027417">
    <property type="entry name" value="P-loop_NTPase"/>
</dbReference>
<dbReference type="NCBIfam" id="NF038214">
    <property type="entry name" value="IS21_help_AAA"/>
    <property type="match status" value="1"/>
</dbReference>
<dbReference type="PANTHER" id="PTHR30050:SF4">
    <property type="entry name" value="ATP-BINDING PROTEIN RV3427C IN INSERTION SEQUENCE-RELATED"/>
    <property type="match status" value="1"/>
</dbReference>
<dbReference type="PANTHER" id="PTHR30050">
    <property type="entry name" value="CHROMOSOMAL REPLICATION INITIATOR PROTEIN DNAA"/>
    <property type="match status" value="1"/>
</dbReference>
<dbReference type="Pfam" id="PF01695">
    <property type="entry name" value="IstB_IS21"/>
    <property type="match status" value="1"/>
</dbReference>
<dbReference type="PIRSF" id="PIRSF003073">
    <property type="entry name" value="DNAC_TnpB_IstB"/>
    <property type="match status" value="1"/>
</dbReference>
<dbReference type="SMART" id="SM00382">
    <property type="entry name" value="AAA"/>
    <property type="match status" value="1"/>
</dbReference>
<dbReference type="SUPFAM" id="SSF52540">
    <property type="entry name" value="P-loop containing nucleoside triphosphate hydrolases"/>
    <property type="match status" value="1"/>
</dbReference>
<protein>
    <recommendedName>
        <fullName>Putative insertion sequence ATP-binding protein y4uH</fullName>
    </recommendedName>
</protein>
<keyword id="KW-0067">ATP-binding</keyword>
<keyword id="KW-0547">Nucleotide-binding</keyword>
<keyword id="KW-0614">Plasmid</keyword>
<keyword id="KW-1185">Reference proteome</keyword>
<keyword id="KW-0814">Transposable element</keyword>
<comment type="similarity">
    <text evidence="2">Belongs to the IS21/IS1162 putative ATP-binding protein family.</text>
</comment>
<proteinExistence type="inferred from homology"/>
<sequence length="248" mass="27975">MLKHPTLNLLQQLGLAGMADAFTRLADNDESDNLSHGEWLALLLDQEATWRNNKRLALRLRNAKLHHPAVPEDIIRRAPREYDRTILDLLIAGDWIRKHENCAIVGPTGIGKSWLACALGHKACRDNHSVLYVRMPALLQSLEQARGIGSLATRLKSLGAVELLILDDYGLQPIDGNAPHYLLEILEGRYGRRSTLVTSQFPVARWHEKISDPTYADAILDRLVHNAHRLEMSGESMRRLRQPAEIQT</sequence>
<geneLocation type="plasmid">
    <name>sym pNGR234a</name>
</geneLocation>
<name>Y4UH_SINFN</name>